<keyword id="KW-0131">Cell cycle</keyword>
<keyword id="KW-0132">Cell division</keyword>
<keyword id="KW-0342">GTP-binding</keyword>
<keyword id="KW-0460">Magnesium</keyword>
<keyword id="KW-0479">Metal-binding</keyword>
<keyword id="KW-0547">Nucleotide-binding</keyword>
<keyword id="KW-1185">Reference proteome</keyword>
<keyword id="KW-0717">Septation</keyword>
<name>ENGB_LEUCK</name>
<evidence type="ECO:0000255" key="1">
    <source>
        <dbReference type="HAMAP-Rule" id="MF_00321"/>
    </source>
</evidence>
<gene>
    <name evidence="1" type="primary">engB</name>
    <name type="ordered locus">LCK_00508</name>
</gene>
<dbReference type="EMBL" id="DQ489736">
    <property type="protein sequence ID" value="ACA82341.1"/>
    <property type="molecule type" value="Genomic_DNA"/>
</dbReference>
<dbReference type="SMR" id="B1MXT9"/>
<dbReference type="STRING" id="349519.LCK_00508"/>
<dbReference type="KEGG" id="lci:LCK_00508"/>
<dbReference type="eggNOG" id="COG0218">
    <property type="taxonomic scope" value="Bacteria"/>
</dbReference>
<dbReference type="HOGENOM" id="CLU_033732_3_0_9"/>
<dbReference type="OrthoDB" id="9804921at2"/>
<dbReference type="Proteomes" id="UP000002166">
    <property type="component" value="Chromosome"/>
</dbReference>
<dbReference type="GO" id="GO:0005829">
    <property type="term" value="C:cytosol"/>
    <property type="evidence" value="ECO:0007669"/>
    <property type="project" value="TreeGrafter"/>
</dbReference>
<dbReference type="GO" id="GO:0005525">
    <property type="term" value="F:GTP binding"/>
    <property type="evidence" value="ECO:0007669"/>
    <property type="project" value="UniProtKB-UniRule"/>
</dbReference>
<dbReference type="GO" id="GO:0046872">
    <property type="term" value="F:metal ion binding"/>
    <property type="evidence" value="ECO:0007669"/>
    <property type="project" value="UniProtKB-KW"/>
</dbReference>
<dbReference type="GO" id="GO:0000917">
    <property type="term" value="P:division septum assembly"/>
    <property type="evidence" value="ECO:0007669"/>
    <property type="project" value="UniProtKB-KW"/>
</dbReference>
<dbReference type="CDD" id="cd01876">
    <property type="entry name" value="YihA_EngB"/>
    <property type="match status" value="1"/>
</dbReference>
<dbReference type="FunFam" id="3.40.50.300:FF:000098">
    <property type="entry name" value="Probable GTP-binding protein EngB"/>
    <property type="match status" value="1"/>
</dbReference>
<dbReference type="Gene3D" id="3.40.50.300">
    <property type="entry name" value="P-loop containing nucleotide triphosphate hydrolases"/>
    <property type="match status" value="1"/>
</dbReference>
<dbReference type="HAMAP" id="MF_00321">
    <property type="entry name" value="GTPase_EngB"/>
    <property type="match status" value="1"/>
</dbReference>
<dbReference type="InterPro" id="IPR030393">
    <property type="entry name" value="G_ENGB_dom"/>
</dbReference>
<dbReference type="InterPro" id="IPR006073">
    <property type="entry name" value="GTP-bd"/>
</dbReference>
<dbReference type="InterPro" id="IPR019987">
    <property type="entry name" value="GTP-bd_ribosome_bio_YsxC"/>
</dbReference>
<dbReference type="InterPro" id="IPR027417">
    <property type="entry name" value="P-loop_NTPase"/>
</dbReference>
<dbReference type="InterPro" id="IPR005225">
    <property type="entry name" value="Small_GTP-bd"/>
</dbReference>
<dbReference type="NCBIfam" id="TIGR03598">
    <property type="entry name" value="GTPase_YsxC"/>
    <property type="match status" value="1"/>
</dbReference>
<dbReference type="NCBIfam" id="TIGR00231">
    <property type="entry name" value="small_GTP"/>
    <property type="match status" value="1"/>
</dbReference>
<dbReference type="PANTHER" id="PTHR11649:SF13">
    <property type="entry name" value="ENGB-TYPE G DOMAIN-CONTAINING PROTEIN"/>
    <property type="match status" value="1"/>
</dbReference>
<dbReference type="PANTHER" id="PTHR11649">
    <property type="entry name" value="MSS1/TRME-RELATED GTP-BINDING PROTEIN"/>
    <property type="match status" value="1"/>
</dbReference>
<dbReference type="Pfam" id="PF01926">
    <property type="entry name" value="MMR_HSR1"/>
    <property type="match status" value="1"/>
</dbReference>
<dbReference type="SUPFAM" id="SSF52540">
    <property type="entry name" value="P-loop containing nucleoside triphosphate hydrolases"/>
    <property type="match status" value="1"/>
</dbReference>
<dbReference type="PROSITE" id="PS51706">
    <property type="entry name" value="G_ENGB"/>
    <property type="match status" value="1"/>
</dbReference>
<reference key="1">
    <citation type="journal article" date="2008" name="J. Bacteriol.">
        <title>Complete genome sequence of Leuconostoc citreum KM20.</title>
        <authorList>
            <person name="Kim J.F."/>
            <person name="Jeong H."/>
            <person name="Lee J.-S."/>
            <person name="Choi S.-H."/>
            <person name="Ha M."/>
            <person name="Hur C.-G."/>
            <person name="Kim J.-S."/>
            <person name="Lee S."/>
            <person name="Park H.-S."/>
            <person name="Park Y.-H."/>
            <person name="Oh T.K."/>
        </authorList>
    </citation>
    <scope>NUCLEOTIDE SEQUENCE [LARGE SCALE GENOMIC DNA]</scope>
    <source>
        <strain>KM20</strain>
    </source>
</reference>
<feature type="chain" id="PRO_1000115985" description="Probable GTP-binding protein EngB">
    <location>
        <begin position="1"/>
        <end position="194"/>
    </location>
</feature>
<feature type="domain" description="EngB-type G" evidence="1">
    <location>
        <begin position="22"/>
        <end position="194"/>
    </location>
</feature>
<feature type="binding site" evidence="1">
    <location>
        <begin position="30"/>
        <end position="37"/>
    </location>
    <ligand>
        <name>GTP</name>
        <dbReference type="ChEBI" id="CHEBI:37565"/>
    </ligand>
</feature>
<feature type="binding site" evidence="1">
    <location>
        <position position="37"/>
    </location>
    <ligand>
        <name>Mg(2+)</name>
        <dbReference type="ChEBI" id="CHEBI:18420"/>
    </ligand>
</feature>
<feature type="binding site" evidence="1">
    <location>
        <begin position="57"/>
        <end position="61"/>
    </location>
    <ligand>
        <name>GTP</name>
        <dbReference type="ChEBI" id="CHEBI:37565"/>
    </ligand>
</feature>
<feature type="binding site" evidence="1">
    <location>
        <position position="59"/>
    </location>
    <ligand>
        <name>Mg(2+)</name>
        <dbReference type="ChEBI" id="CHEBI:18420"/>
    </ligand>
</feature>
<feature type="binding site" evidence="1">
    <location>
        <begin position="75"/>
        <end position="78"/>
    </location>
    <ligand>
        <name>GTP</name>
        <dbReference type="ChEBI" id="CHEBI:37565"/>
    </ligand>
</feature>
<feature type="binding site" evidence="1">
    <location>
        <begin position="142"/>
        <end position="145"/>
    </location>
    <ligand>
        <name>GTP</name>
        <dbReference type="ChEBI" id="CHEBI:37565"/>
    </ligand>
</feature>
<feature type="binding site" evidence="1">
    <location>
        <begin position="175"/>
        <end position="177"/>
    </location>
    <ligand>
        <name>GTP</name>
        <dbReference type="ChEBI" id="CHEBI:37565"/>
    </ligand>
</feature>
<comment type="function">
    <text evidence="1">Necessary for normal cell division and for the maintenance of normal septation.</text>
</comment>
<comment type="cofactor">
    <cofactor evidence="1">
        <name>Mg(2+)</name>
        <dbReference type="ChEBI" id="CHEBI:18420"/>
    </cofactor>
</comment>
<comment type="similarity">
    <text evidence="1">Belongs to the TRAFAC class TrmE-Era-EngA-EngB-Septin-like GTPase superfamily. EngB GTPase family.</text>
</comment>
<accession>B1MXT9</accession>
<organism>
    <name type="scientific">Leuconostoc citreum (strain KM20)</name>
    <dbReference type="NCBI Taxonomy" id="349519"/>
    <lineage>
        <taxon>Bacteria</taxon>
        <taxon>Bacillati</taxon>
        <taxon>Bacillota</taxon>
        <taxon>Bacilli</taxon>
        <taxon>Lactobacillales</taxon>
        <taxon>Lactobacillaceae</taxon>
        <taxon>Leuconostoc</taxon>
    </lineage>
</organism>
<proteinExistence type="inferred from homology"/>
<protein>
    <recommendedName>
        <fullName evidence="1">Probable GTP-binding protein EngB</fullName>
    </recommendedName>
</protein>
<sequence length="194" mass="22111">MNVNNVEMVMSAVSAAQYPTDGKPEIALVGRSNVGKSSLTNTLIQRKNFARTSSQPGKTQTLNFYDVENQLYFVDVPGYGYAKVSKKQREAFGNMIEEYITSRKQLRGVISLVDARHDPSEDDVAMYEWLHYYNIPILVVATKSDKISKSKFNKYENNIKKQLGFDSSASDFLFFSSETKYGRDSVWEWITAHM</sequence>